<sequence length="765" mass="84357">MASHIVGYPRMGPKRELKFALESFWDGKSTAEDLQKVSADLRSSIWKQMSAAGTKFIPSNTFAHYDQVLDTTAMLGAVPPRYGYTGGEIGLDVYFSMARGNASVPAMEMTKWFDTNYHYIVPELGPEVNFSYASHKAVNEYKEAKALGVDTVPVLVGPVSYLLLSKAAKGVDKSFELLSLLPKILPIYKEVITELKAAGATWIQLDEPVLVMDLEGQKLQAFTGAYAELESTLSGLNVLVETYFADIPAEAYKTLTSLKGVTAFGFDLVRGTKTLDLVKAGFPEGKYLFAGVVDGRNIWANDFAASLSTLQALEGIVGKDKLVVSTSCSLLHTAVDLINETKLDDEIKSWLAFAAQKVVEVNALAKALAGQKDEALFSANAAALASRRSSPRVTNEGVQKAAAALKGSDHRRATNVSARLDAQQKKLNLPILPTTTIGSFPQTVELRRVRREYKAKKVSEEDYVKAIKEEIKKVVDLQEELDIDVLVHGEPERNDMVEYFGEQLSGFAFTANGWVQSYGSRCVKPPVIYGDVSRPKAMTVFWSAMAQSMTSRPMKGMLTGPVTILNWSFVRNDQPRHETCYQIALAIKDEVEDLEKGGIGVIQIDEAALREGLPLRKSEHAFYLDWAVHSFRITNCGVQDSTQIHTHMCYSHFNDIIHSIIDMDADVITIENSRSDEKLLSVFREGVKYGAGIGPGVYDIHSPRIPSSEEIADRVNKMLAVLEQNILWVNPDCGLKTRKYTEVKPALKNMVDAAKLIRSQLASAK</sequence>
<name>METE1_ARATH</name>
<feature type="chain" id="PRO_0000098696" description="5-methyltetrahydropteroyltriglutamate--homocysteine methyltransferase 1">
    <location>
        <begin position="1"/>
        <end position="765"/>
    </location>
</feature>
<feature type="active site" description="Proton donor" evidence="1">
    <location>
        <position position="701"/>
    </location>
</feature>
<feature type="binding site" evidence="3 6 8">
    <location>
        <position position="18"/>
    </location>
    <ligand>
        <name>5-methyltetrahydropteroyltri-L-glutamate</name>
        <dbReference type="ChEBI" id="CHEBI:58207"/>
    </ligand>
</feature>
<feature type="binding site" evidence="3 6">
    <location>
        <position position="116"/>
    </location>
    <ligand>
        <name>5-methyltetrahydropteroyltri-L-glutamate</name>
        <dbReference type="ChEBI" id="CHEBI:58207"/>
    </ligand>
</feature>
<feature type="binding site" evidence="3 8">
    <location>
        <begin position="437"/>
        <end position="439"/>
    </location>
    <ligand>
        <name>L-homocysteine</name>
        <dbReference type="ChEBI" id="CHEBI:58199"/>
    </ligand>
</feature>
<feature type="binding site" evidence="3 5 6">
    <location>
        <begin position="437"/>
        <end position="439"/>
    </location>
    <ligand>
        <name>L-methionine</name>
        <dbReference type="ChEBI" id="CHEBI:57844"/>
    </ligand>
</feature>
<feature type="binding site" evidence="3 5 6">
    <location>
        <position position="490"/>
    </location>
    <ligand>
        <name>L-methionine</name>
        <dbReference type="ChEBI" id="CHEBI:57844"/>
    </ligand>
</feature>
<feature type="binding site" evidence="3 6 8">
    <location>
        <begin position="521"/>
        <end position="522"/>
    </location>
    <ligand>
        <name>5-methyltetrahydropteroyltri-L-glutamate</name>
        <dbReference type="ChEBI" id="CHEBI:58207"/>
    </ligand>
</feature>
<feature type="binding site" evidence="3 6 8">
    <location>
        <position position="567"/>
    </location>
    <ligand>
        <name>5-methyltetrahydropteroyltri-L-glutamate</name>
        <dbReference type="ChEBI" id="CHEBI:58207"/>
    </ligand>
</feature>
<feature type="binding site" evidence="3 8">
    <location>
        <position position="605"/>
    </location>
    <ligand>
        <name>L-homocysteine</name>
        <dbReference type="ChEBI" id="CHEBI:58199"/>
    </ligand>
</feature>
<feature type="binding site" evidence="3 5 6">
    <location>
        <position position="605"/>
    </location>
    <ligand>
        <name>L-methionine</name>
        <dbReference type="ChEBI" id="CHEBI:57844"/>
    </ligand>
</feature>
<feature type="binding site" evidence="3 5 6 7 8">
    <location>
        <position position="647"/>
    </location>
    <ligand>
        <name>Zn(2+)</name>
        <dbReference type="ChEBI" id="CHEBI:29105"/>
        <label>1</label>
        <note>catalytic</note>
    </ligand>
</feature>
<feature type="binding site" evidence="3 5 6 8">
    <location>
        <position position="649"/>
    </location>
    <ligand>
        <name>Zn(2+)</name>
        <dbReference type="ChEBI" id="CHEBI:29105"/>
        <label>1</label>
        <note>catalytic</note>
    </ligand>
</feature>
<feature type="binding site" evidence="3 5 6 7 8">
    <location>
        <position position="658"/>
    </location>
    <ligand>
        <name>Zn(2+)</name>
        <dbReference type="ChEBI" id="CHEBI:29105"/>
        <label>2</label>
    </ligand>
</feature>
<feature type="binding site" evidence="3 5 6 7 8">
    <location>
        <position position="662"/>
    </location>
    <ligand>
        <name>Zn(2+)</name>
        <dbReference type="ChEBI" id="CHEBI:29105"/>
        <label>2</label>
    </ligand>
</feature>
<feature type="binding site" evidence="1">
    <location>
        <position position="671"/>
    </location>
    <ligand>
        <name>Zn(2+)</name>
        <dbReference type="ChEBI" id="CHEBI:29105"/>
        <label>1</label>
        <note>catalytic</note>
    </ligand>
</feature>
<feature type="binding site" evidence="3 5 6 8">
    <location>
        <position position="733"/>
    </location>
    <ligand>
        <name>Zn(2+)</name>
        <dbReference type="ChEBI" id="CHEBI:29105"/>
        <label>1</label>
        <note>catalytic</note>
    </ligand>
</feature>
<feature type="sequence conflict" description="In Ref. 6; AAL09712." evidence="4" ref="6">
    <original>R</original>
    <variation>L</variation>
    <location>
        <position position="270"/>
    </location>
</feature>
<feature type="sequence conflict" description="In Ref. 3; CAE55863." evidence="4" ref="3">
    <original>F</original>
    <variation>S</variation>
    <location>
        <position position="282"/>
    </location>
</feature>
<feature type="sequence conflict" description="In Ref. 6; AAN31836." evidence="4" ref="6">
    <original>G</original>
    <variation>R</variation>
    <location>
        <position position="295"/>
    </location>
</feature>
<feature type="sequence conflict" description="In Ref. 3; CAE55863." evidence="4" ref="3">
    <original>L</original>
    <variation>M</variation>
    <location>
        <position position="351"/>
    </location>
</feature>
<feature type="sequence conflict" description="In Ref. 6; AAN31836." evidence="4" ref="6">
    <original>Q</original>
    <variation>R</variation>
    <location>
        <position position="442"/>
    </location>
</feature>
<feature type="helix" evidence="10">
    <location>
        <begin position="16"/>
        <end position="26"/>
    </location>
</feature>
<feature type="helix" evidence="10">
    <location>
        <begin position="31"/>
        <end position="51"/>
    </location>
</feature>
<feature type="strand" evidence="10">
    <location>
        <begin position="58"/>
        <end position="60"/>
    </location>
</feature>
<feature type="helix" evidence="10">
    <location>
        <begin position="67"/>
        <end position="74"/>
    </location>
</feature>
<feature type="helix" evidence="10">
    <location>
        <begin position="80"/>
        <end position="82"/>
    </location>
</feature>
<feature type="strand" evidence="10">
    <location>
        <begin position="86"/>
        <end position="88"/>
    </location>
</feature>
<feature type="helix" evidence="10">
    <location>
        <begin position="91"/>
        <end position="99"/>
    </location>
</feature>
<feature type="strand" evidence="10">
    <location>
        <begin position="102"/>
        <end position="104"/>
    </location>
</feature>
<feature type="strand" evidence="10">
    <location>
        <begin position="109"/>
        <end position="111"/>
    </location>
</feature>
<feature type="strand" evidence="10">
    <location>
        <begin position="118"/>
        <end position="120"/>
    </location>
</feature>
<feature type="helix" evidence="10">
    <location>
        <begin position="136"/>
        <end position="146"/>
    </location>
</feature>
<feature type="strand" evidence="10">
    <location>
        <begin position="152"/>
        <end position="156"/>
    </location>
</feature>
<feature type="helix" evidence="10">
    <location>
        <begin position="158"/>
        <end position="163"/>
    </location>
</feature>
<feature type="strand" evidence="11">
    <location>
        <begin position="169"/>
        <end position="171"/>
    </location>
</feature>
<feature type="helix" evidence="10">
    <location>
        <begin position="177"/>
        <end position="180"/>
    </location>
</feature>
<feature type="helix" evidence="10">
    <location>
        <begin position="181"/>
        <end position="197"/>
    </location>
</feature>
<feature type="strand" evidence="10">
    <location>
        <begin position="202"/>
        <end position="206"/>
    </location>
</feature>
<feature type="helix" evidence="10">
    <location>
        <begin position="208"/>
        <end position="211"/>
    </location>
</feature>
<feature type="helix" evidence="10">
    <location>
        <begin position="216"/>
        <end position="228"/>
    </location>
</feature>
<feature type="turn" evidence="10">
    <location>
        <begin position="230"/>
        <end position="233"/>
    </location>
</feature>
<feature type="strand" evidence="10">
    <location>
        <begin position="235"/>
        <end position="241"/>
    </location>
</feature>
<feature type="helix" evidence="10">
    <location>
        <begin position="249"/>
        <end position="255"/>
    </location>
</feature>
<feature type="strand" evidence="10">
    <location>
        <begin position="263"/>
        <end position="270"/>
    </location>
</feature>
<feature type="helix" evidence="10">
    <location>
        <begin position="274"/>
        <end position="280"/>
    </location>
</feature>
<feature type="strand" evidence="10">
    <location>
        <begin position="287"/>
        <end position="293"/>
    </location>
</feature>
<feature type="strand" evidence="10">
    <location>
        <begin position="295"/>
        <end position="297"/>
    </location>
</feature>
<feature type="helix" evidence="10">
    <location>
        <begin position="303"/>
        <end position="316"/>
    </location>
</feature>
<feature type="strand" evidence="10">
    <location>
        <begin position="322"/>
        <end position="328"/>
    </location>
</feature>
<feature type="helix" evidence="10">
    <location>
        <begin position="330"/>
        <end position="332"/>
    </location>
</feature>
<feature type="helix" evidence="10">
    <location>
        <begin position="337"/>
        <end position="339"/>
    </location>
</feature>
<feature type="helix" evidence="10">
    <location>
        <begin position="345"/>
        <end position="348"/>
    </location>
</feature>
<feature type="helix" evidence="10">
    <location>
        <begin position="354"/>
        <end position="368"/>
    </location>
</feature>
<feature type="helix" evidence="10">
    <location>
        <begin position="374"/>
        <end position="389"/>
    </location>
</feature>
<feature type="turn" evidence="10">
    <location>
        <begin position="391"/>
        <end position="393"/>
    </location>
</feature>
<feature type="helix" evidence="10">
    <location>
        <begin position="397"/>
        <end position="400"/>
    </location>
</feature>
<feature type="turn" evidence="10">
    <location>
        <begin position="401"/>
        <end position="405"/>
    </location>
</feature>
<feature type="strand" evidence="9">
    <location>
        <begin position="411"/>
        <end position="413"/>
    </location>
</feature>
<feature type="helix" evidence="10">
    <location>
        <begin position="416"/>
        <end position="418"/>
    </location>
</feature>
<feature type="helix" evidence="10">
    <location>
        <begin position="420"/>
        <end position="426"/>
    </location>
</feature>
<feature type="helix" evidence="10">
    <location>
        <begin position="463"/>
        <end position="479"/>
    </location>
</feature>
<feature type="strand" evidence="10">
    <location>
        <begin position="484"/>
        <end position="486"/>
    </location>
</feature>
<feature type="helix" evidence="10">
    <location>
        <begin position="498"/>
        <end position="501"/>
    </location>
</feature>
<feature type="strand" evidence="12">
    <location>
        <begin position="504"/>
        <end position="508"/>
    </location>
</feature>
<feature type="strand" evidence="10">
    <location>
        <begin position="515"/>
        <end position="518"/>
    </location>
</feature>
<feature type="strand" evidence="10">
    <location>
        <begin position="521"/>
        <end position="523"/>
    </location>
</feature>
<feature type="helix" evidence="10">
    <location>
        <begin position="541"/>
        <end position="546"/>
    </location>
</feature>
<feature type="strand" evidence="10">
    <location>
        <begin position="554"/>
        <end position="559"/>
    </location>
</feature>
<feature type="helix" evidence="10">
    <location>
        <begin position="561"/>
        <end position="566"/>
    </location>
</feature>
<feature type="strand" evidence="10">
    <location>
        <begin position="568"/>
        <end position="570"/>
    </location>
</feature>
<feature type="strand" evidence="9">
    <location>
        <begin position="572"/>
        <end position="574"/>
    </location>
</feature>
<feature type="helix" evidence="10">
    <location>
        <begin position="576"/>
        <end position="596"/>
    </location>
</feature>
<feature type="strand" evidence="10">
    <location>
        <begin position="601"/>
        <end position="605"/>
    </location>
</feature>
<feature type="turn" evidence="9">
    <location>
        <begin position="607"/>
        <end position="612"/>
    </location>
</feature>
<feature type="helix" evidence="10">
    <location>
        <begin position="617"/>
        <end position="619"/>
    </location>
</feature>
<feature type="helix" evidence="10">
    <location>
        <begin position="620"/>
        <end position="635"/>
    </location>
</feature>
<feature type="strand" evidence="10">
    <location>
        <begin position="640"/>
        <end position="647"/>
    </location>
</feature>
<feature type="turn" evidence="10">
    <location>
        <begin position="654"/>
        <end position="656"/>
    </location>
</feature>
<feature type="helix" evidence="10">
    <location>
        <begin position="657"/>
        <end position="661"/>
    </location>
</feature>
<feature type="strand" evidence="10">
    <location>
        <begin position="666"/>
        <end position="669"/>
    </location>
</feature>
<feature type="strand" evidence="10">
    <location>
        <begin position="672"/>
        <end position="675"/>
    </location>
</feature>
<feature type="helix" evidence="10">
    <location>
        <begin position="679"/>
        <end position="683"/>
    </location>
</feature>
<feature type="turn" evidence="10">
    <location>
        <begin position="684"/>
        <end position="687"/>
    </location>
</feature>
<feature type="strand" evidence="10">
    <location>
        <begin position="691"/>
        <end position="693"/>
    </location>
</feature>
<feature type="strand" evidence="10">
    <location>
        <begin position="696"/>
        <end position="698"/>
    </location>
</feature>
<feature type="strand" evidence="10">
    <location>
        <begin position="702"/>
        <end position="704"/>
    </location>
</feature>
<feature type="helix" evidence="10">
    <location>
        <begin position="708"/>
        <end position="720"/>
    </location>
</feature>
<feature type="strand" evidence="12">
    <location>
        <begin position="724"/>
        <end position="727"/>
    </location>
</feature>
<feature type="strand" evidence="10">
    <location>
        <begin position="735"/>
        <end position="738"/>
    </location>
</feature>
<feature type="helix" evidence="10">
    <location>
        <begin position="740"/>
        <end position="759"/>
    </location>
</feature>
<evidence type="ECO:0000250" key="1">
    <source>
        <dbReference type="UniProtKB" id="P82610"/>
    </source>
</evidence>
<evidence type="ECO:0000269" key="2">
    <source>
    </source>
</evidence>
<evidence type="ECO:0000269" key="3">
    <source>
    </source>
</evidence>
<evidence type="ECO:0000305" key="4"/>
<evidence type="ECO:0007744" key="5">
    <source>
        <dbReference type="PDB" id="1U1H"/>
    </source>
</evidence>
<evidence type="ECO:0007744" key="6">
    <source>
        <dbReference type="PDB" id="1U1J"/>
    </source>
</evidence>
<evidence type="ECO:0007744" key="7">
    <source>
        <dbReference type="PDB" id="1U1U"/>
    </source>
</evidence>
<evidence type="ECO:0007744" key="8">
    <source>
        <dbReference type="PDB" id="1U22"/>
    </source>
</evidence>
<evidence type="ECO:0007829" key="9">
    <source>
        <dbReference type="PDB" id="1U1H"/>
    </source>
</evidence>
<evidence type="ECO:0007829" key="10">
    <source>
        <dbReference type="PDB" id="1U1J"/>
    </source>
</evidence>
<evidence type="ECO:0007829" key="11">
    <source>
        <dbReference type="PDB" id="1U1U"/>
    </source>
</evidence>
<evidence type="ECO:0007829" key="12">
    <source>
        <dbReference type="PDB" id="1U22"/>
    </source>
</evidence>
<organism>
    <name type="scientific">Arabidopsis thaliana</name>
    <name type="common">Mouse-ear cress</name>
    <dbReference type="NCBI Taxonomy" id="3702"/>
    <lineage>
        <taxon>Eukaryota</taxon>
        <taxon>Viridiplantae</taxon>
        <taxon>Streptophyta</taxon>
        <taxon>Embryophyta</taxon>
        <taxon>Tracheophyta</taxon>
        <taxon>Spermatophyta</taxon>
        <taxon>Magnoliopsida</taxon>
        <taxon>eudicotyledons</taxon>
        <taxon>Gunneridae</taxon>
        <taxon>Pentapetalae</taxon>
        <taxon>rosids</taxon>
        <taxon>malvids</taxon>
        <taxon>Brassicales</taxon>
        <taxon>Brassicaceae</taxon>
        <taxon>Camelineae</taxon>
        <taxon>Arabidopsis</taxon>
    </lineage>
</organism>
<comment type="function">
    <text evidence="2">Catalyzes the transfer of a methyl group from 5-methyltetrahydrofolate to homocysteine resulting in methionine formation.</text>
</comment>
<comment type="catalytic activity">
    <reaction evidence="2">
        <text>5-methyltetrahydropteroyltri-L-glutamate + L-homocysteine = tetrahydropteroyltri-L-glutamate + L-methionine</text>
        <dbReference type="Rhea" id="RHEA:21196"/>
        <dbReference type="ChEBI" id="CHEBI:57844"/>
        <dbReference type="ChEBI" id="CHEBI:58140"/>
        <dbReference type="ChEBI" id="CHEBI:58199"/>
        <dbReference type="ChEBI" id="CHEBI:58207"/>
        <dbReference type="EC" id="2.1.1.14"/>
    </reaction>
</comment>
<comment type="cofactor">
    <cofactor evidence="3">
        <name>Zn(2+)</name>
        <dbReference type="ChEBI" id="CHEBI:29105"/>
    </cofactor>
    <text evidence="3">Binds 2 Zn(2+) ions per subunit.</text>
</comment>
<comment type="biophysicochemical properties">
    <kinetics>
        <KM evidence="2">60 uM for 5-methyltetrahydrofolate</KM>
        <Vmax evidence="2">26.5 nmol/min/mg enzyme toward 5-methyltetrahydrofolate</Vmax>
    </kinetics>
</comment>
<comment type="pathway">
    <text evidence="2">Amino-acid biosynthesis; L-methionine biosynthesis via de novo pathway; L-methionine from L-homocysteine (MetE route): step 1/1.</text>
</comment>
<comment type="subcellular location">
    <subcellularLocation>
        <location evidence="2">Cytoplasm</location>
        <location evidence="2">Cytosol</location>
    </subcellularLocation>
</comment>
<comment type="tissue specificity">
    <text evidence="2">Expressed in leaves, stems, flowers, siliques and seeds.</text>
</comment>
<comment type="similarity">
    <text evidence="4">Belongs to the vitamin-B12 independent methionine synthase family.</text>
</comment>
<keyword id="KW-0002">3D-structure</keyword>
<keyword id="KW-0028">Amino-acid biosynthesis</keyword>
<keyword id="KW-0963">Cytoplasm</keyword>
<keyword id="KW-0479">Metal-binding</keyword>
<keyword id="KW-0486">Methionine biosynthesis</keyword>
<keyword id="KW-0489">Methyltransferase</keyword>
<keyword id="KW-1185">Reference proteome</keyword>
<keyword id="KW-0808">Transferase</keyword>
<keyword id="KW-0862">Zinc</keyword>
<reference key="1">
    <citation type="journal article" date="1998" name="Proc. Natl. Acad. Sci. U.S.A.">
        <title>The specific features of methionine biosynthesis and metabolism in plants.</title>
        <authorList>
            <person name="Ravanel S."/>
            <person name="Gakiere B."/>
            <person name="Job D."/>
            <person name="Douce R."/>
        </authorList>
    </citation>
    <scope>NUCLEOTIDE SEQUENCE [MRNA]</scope>
    <scope>CHARACTERIZATION</scope>
    <source>
        <strain>cv. Columbia</strain>
    </source>
</reference>
<reference key="2">
    <citation type="online journal article" date="1999" name="Plant Gene Register">
        <title>Characterization of the cDNA and gene for a cytosolic cobalamin-independent methionine synthase in Arabidopsis thaliana.</title>
        <authorList>
            <person name="Gakiere B."/>
            <person name="Job D."/>
            <person name="Douce R."/>
            <person name="Ravanel S."/>
        </authorList>
        <locator>PGR99-115</locator>
    </citation>
    <scope>NUCLEOTIDE SEQUENCE [MRNA]</scope>
    <source>
        <strain>cv. Columbia</strain>
    </source>
</reference>
<reference key="3">
    <citation type="journal article" date="2004" name="J. Biol. Chem.">
        <title>Methionine metabolism in plants: chloroplasts are autonomous for de novo methionine synthesis and can import S-adenosylmethionine from the cytosol.</title>
        <authorList>
            <person name="Ravanel S."/>
            <person name="Block M.A."/>
            <person name="Rippert P."/>
            <person name="Jabrin S."/>
            <person name="Curien G."/>
            <person name="Rebeille F."/>
            <person name="Douce R."/>
        </authorList>
    </citation>
    <scope>NUCLEOTIDE SEQUENCE [MRNA]</scope>
    <scope>FUNCTION</scope>
    <scope>CATALYTIC ACTIVITY</scope>
    <scope>BIOPHYSICOCHEMICAL PROPERTIES</scope>
    <scope>SUBCELLULAR LOCATION</scope>
    <scope>TISSUE SPECIFICITY</scope>
    <source>
        <strain>cv. Wassilewskija</strain>
    </source>
</reference>
<reference key="4">
    <citation type="journal article" date="1998" name="DNA Res.">
        <title>Structural analysis of Arabidopsis thaliana chromosome 5. V. Sequence features of the regions of 1,381,565 bp covered by twenty one physically assigned P1 and TAC clones.</title>
        <authorList>
            <person name="Kaneko T."/>
            <person name="Kotani H."/>
            <person name="Nakamura Y."/>
            <person name="Sato S."/>
            <person name="Asamizu E."/>
            <person name="Miyajima N."/>
            <person name="Tabata S."/>
        </authorList>
    </citation>
    <scope>NUCLEOTIDE SEQUENCE [LARGE SCALE GENOMIC DNA]</scope>
    <source>
        <strain>cv. Columbia</strain>
    </source>
</reference>
<reference key="5">
    <citation type="journal article" date="2017" name="Plant J.">
        <title>Araport11: a complete reannotation of the Arabidopsis thaliana reference genome.</title>
        <authorList>
            <person name="Cheng C.Y."/>
            <person name="Krishnakumar V."/>
            <person name="Chan A.P."/>
            <person name="Thibaud-Nissen F."/>
            <person name="Schobel S."/>
            <person name="Town C.D."/>
        </authorList>
    </citation>
    <scope>GENOME REANNOTATION</scope>
    <source>
        <strain>cv. Columbia</strain>
    </source>
</reference>
<reference key="6">
    <citation type="journal article" date="2003" name="Science">
        <title>Empirical analysis of transcriptional activity in the Arabidopsis genome.</title>
        <authorList>
            <person name="Yamada K."/>
            <person name="Lim J."/>
            <person name="Dale J.M."/>
            <person name="Chen H."/>
            <person name="Shinn P."/>
            <person name="Palm C.J."/>
            <person name="Southwick A.M."/>
            <person name="Wu H.C."/>
            <person name="Kim C.J."/>
            <person name="Nguyen M."/>
            <person name="Pham P.K."/>
            <person name="Cheuk R.F."/>
            <person name="Karlin-Newmann G."/>
            <person name="Liu S.X."/>
            <person name="Lam B."/>
            <person name="Sakano H."/>
            <person name="Wu T."/>
            <person name="Yu G."/>
            <person name="Miranda M."/>
            <person name="Quach H.L."/>
            <person name="Tripp M."/>
            <person name="Chang C.H."/>
            <person name="Lee J.M."/>
            <person name="Toriumi M.J."/>
            <person name="Chan M.M."/>
            <person name="Tang C.C."/>
            <person name="Onodera C.S."/>
            <person name="Deng J.M."/>
            <person name="Akiyama K."/>
            <person name="Ansari Y."/>
            <person name="Arakawa T."/>
            <person name="Banh J."/>
            <person name="Banno F."/>
            <person name="Bowser L."/>
            <person name="Brooks S.Y."/>
            <person name="Carninci P."/>
            <person name="Chao Q."/>
            <person name="Choy N."/>
            <person name="Enju A."/>
            <person name="Goldsmith A.D."/>
            <person name="Gurjal M."/>
            <person name="Hansen N.F."/>
            <person name="Hayashizaki Y."/>
            <person name="Johnson-Hopson C."/>
            <person name="Hsuan V.W."/>
            <person name="Iida K."/>
            <person name="Karnes M."/>
            <person name="Khan S."/>
            <person name="Koesema E."/>
            <person name="Ishida J."/>
            <person name="Jiang P.X."/>
            <person name="Jones T."/>
            <person name="Kawai J."/>
            <person name="Kamiya A."/>
            <person name="Meyers C."/>
            <person name="Nakajima M."/>
            <person name="Narusaka M."/>
            <person name="Seki M."/>
            <person name="Sakurai T."/>
            <person name="Satou M."/>
            <person name="Tamse R."/>
            <person name="Vaysberg M."/>
            <person name="Wallender E.K."/>
            <person name="Wong C."/>
            <person name="Yamamura Y."/>
            <person name="Yuan S."/>
            <person name="Shinozaki K."/>
            <person name="Davis R.W."/>
            <person name="Theologis A."/>
            <person name="Ecker J.R."/>
        </authorList>
    </citation>
    <scope>NUCLEOTIDE SEQUENCE [LARGE SCALE MRNA]</scope>
    <source>
        <strain>cv. Columbia</strain>
    </source>
</reference>
<reference evidence="5 6 7 8" key="7">
    <citation type="journal article" date="2004" name="J. Biol. Chem.">
        <title>Crystal structures of cobalamin-independent methionine synthase complexed with zinc, homocysteine, and methyltetrahydrofolate.</title>
        <authorList>
            <person name="Ferrer J.L."/>
            <person name="Ravanel S."/>
            <person name="Robert M."/>
            <person name="Dumas R."/>
        </authorList>
    </citation>
    <scope>X-RAY CRYSTALLOGRAPHY (2.40 ANGSTROMS) IN COMPLEXES WITH 5-METHYLTETRAHYDROFOLATE; L-HOMOCYSTEINE; L-METHIONINE AND ZINC IONS</scope>
    <scope>COFACTOR</scope>
</reference>
<dbReference type="EC" id="2.1.1.14" evidence="2"/>
<dbReference type="EMBL" id="U97200">
    <property type="protein sequence ID" value="AAC50037.1"/>
    <property type="molecule type" value="mRNA"/>
</dbReference>
<dbReference type="EMBL" id="AJ608673">
    <property type="protein sequence ID" value="CAE55863.1"/>
    <property type="molecule type" value="mRNA"/>
</dbReference>
<dbReference type="EMBL" id="AB011480">
    <property type="protein sequence ID" value="BAB11226.1"/>
    <property type="molecule type" value="Genomic_DNA"/>
</dbReference>
<dbReference type="EMBL" id="CP002688">
    <property type="protein sequence ID" value="AED92486.1"/>
    <property type="molecule type" value="Genomic_DNA"/>
</dbReference>
<dbReference type="EMBL" id="CP002688">
    <property type="protein sequence ID" value="AED92487.1"/>
    <property type="molecule type" value="Genomic_DNA"/>
</dbReference>
<dbReference type="EMBL" id="AF370522">
    <property type="protein sequence ID" value="AAK43899.1"/>
    <property type="molecule type" value="mRNA"/>
</dbReference>
<dbReference type="EMBL" id="AY048201">
    <property type="protein sequence ID" value="AAK82464.1"/>
    <property type="molecule type" value="mRNA"/>
</dbReference>
<dbReference type="EMBL" id="AY056098">
    <property type="protein sequence ID" value="AAL06986.1"/>
    <property type="molecule type" value="mRNA"/>
</dbReference>
<dbReference type="EMBL" id="AY057478">
    <property type="protein sequence ID" value="AAL09712.1"/>
    <property type="molecule type" value="mRNA"/>
</dbReference>
<dbReference type="EMBL" id="AY057499">
    <property type="protein sequence ID" value="AAL09740.1"/>
    <property type="molecule type" value="mRNA"/>
</dbReference>
<dbReference type="EMBL" id="AY069876">
    <property type="protein sequence ID" value="AAL47432.1"/>
    <property type="molecule type" value="mRNA"/>
</dbReference>
<dbReference type="EMBL" id="AY070771">
    <property type="protein sequence ID" value="AAL50108.1"/>
    <property type="molecule type" value="mRNA"/>
</dbReference>
<dbReference type="EMBL" id="AY091692">
    <property type="protein sequence ID" value="AAM10291.1"/>
    <property type="molecule type" value="mRNA"/>
</dbReference>
<dbReference type="EMBL" id="BT000691">
    <property type="protein sequence ID" value="AAN31836.1"/>
    <property type="molecule type" value="mRNA"/>
</dbReference>
<dbReference type="PDB" id="1U1H">
    <property type="method" value="X-ray"/>
    <property type="resolution" value="2.55 A"/>
    <property type="chains" value="A=1-765"/>
</dbReference>
<dbReference type="PDB" id="1U1J">
    <property type="method" value="X-ray"/>
    <property type="resolution" value="2.40 A"/>
    <property type="chains" value="A=1-765"/>
</dbReference>
<dbReference type="PDB" id="1U1U">
    <property type="method" value="X-ray"/>
    <property type="resolution" value="2.95 A"/>
    <property type="chains" value="A=1-765"/>
</dbReference>
<dbReference type="PDB" id="1U22">
    <property type="method" value="X-ray"/>
    <property type="resolution" value="2.65 A"/>
    <property type="chains" value="A=1-765"/>
</dbReference>
<dbReference type="PDBsum" id="1U1H"/>
<dbReference type="PDBsum" id="1U1J"/>
<dbReference type="PDBsum" id="1U1U"/>
<dbReference type="PDBsum" id="1U22"/>
<dbReference type="SMR" id="O50008"/>
<dbReference type="BioGRID" id="16936">
    <property type="interactions" value="14"/>
</dbReference>
<dbReference type="FunCoup" id="O50008">
    <property type="interactions" value="1676"/>
</dbReference>
<dbReference type="IntAct" id="O50008">
    <property type="interactions" value="2"/>
</dbReference>
<dbReference type="MINT" id="O50008"/>
<dbReference type="STRING" id="3702.O50008"/>
<dbReference type="iPTMnet" id="O50008"/>
<dbReference type="MetOSite" id="O50008"/>
<dbReference type="PaxDb" id="3702-AT5G17920.1"/>
<dbReference type="ProteomicsDB" id="238988"/>
<dbReference type="EnsemblPlants" id="AT5G17920.1">
    <property type="protein sequence ID" value="AT5G17920.1"/>
    <property type="gene ID" value="AT5G17920"/>
</dbReference>
<dbReference type="EnsemblPlants" id="AT5G17920.2">
    <property type="protein sequence ID" value="AT5G17920.2"/>
    <property type="gene ID" value="AT5G17920"/>
</dbReference>
<dbReference type="Gramene" id="AT5G17920.1">
    <property type="protein sequence ID" value="AT5G17920.1"/>
    <property type="gene ID" value="AT5G17920"/>
</dbReference>
<dbReference type="Gramene" id="AT5G17920.2">
    <property type="protein sequence ID" value="AT5G17920.2"/>
    <property type="gene ID" value="AT5G17920"/>
</dbReference>
<dbReference type="KEGG" id="ath:AT5G17920"/>
<dbReference type="Araport" id="AT5G17920"/>
<dbReference type="TAIR" id="AT5G17920">
    <property type="gene designation" value="ATMS1"/>
</dbReference>
<dbReference type="eggNOG" id="KOG2263">
    <property type="taxonomic scope" value="Eukaryota"/>
</dbReference>
<dbReference type="HOGENOM" id="CLU_013175_0_0_1"/>
<dbReference type="InParanoid" id="O50008"/>
<dbReference type="OMA" id="KVMKGML"/>
<dbReference type="PhylomeDB" id="O50008"/>
<dbReference type="BioCyc" id="ARA:AT5G17920-MONOMER"/>
<dbReference type="BRENDA" id="2.1.1.14">
    <property type="organism ID" value="399"/>
</dbReference>
<dbReference type="SABIO-RK" id="O50008"/>
<dbReference type="UniPathway" id="UPA00051">
    <property type="reaction ID" value="UER00082"/>
</dbReference>
<dbReference type="CD-CODE" id="4299E36E">
    <property type="entry name" value="Nucleolus"/>
</dbReference>
<dbReference type="EvolutionaryTrace" id="O50008"/>
<dbReference type="PRO" id="PR:O50008"/>
<dbReference type="Proteomes" id="UP000006548">
    <property type="component" value="Chromosome 5"/>
</dbReference>
<dbReference type="ExpressionAtlas" id="O50008">
    <property type="expression patterns" value="baseline and differential"/>
</dbReference>
<dbReference type="GO" id="GO:0048046">
    <property type="term" value="C:apoplast"/>
    <property type="evidence" value="ECO:0007005"/>
    <property type="project" value="TAIR"/>
</dbReference>
<dbReference type="GO" id="GO:0009507">
    <property type="term" value="C:chloroplast"/>
    <property type="evidence" value="ECO:0007005"/>
    <property type="project" value="TAIR"/>
</dbReference>
<dbReference type="GO" id="GO:0009570">
    <property type="term" value="C:chloroplast stroma"/>
    <property type="evidence" value="ECO:0007005"/>
    <property type="project" value="TAIR"/>
</dbReference>
<dbReference type="GO" id="GO:0005829">
    <property type="term" value="C:cytosol"/>
    <property type="evidence" value="ECO:0000314"/>
    <property type="project" value="UniProtKB"/>
</dbReference>
<dbReference type="GO" id="GO:0005777">
    <property type="term" value="C:peroxisome"/>
    <property type="evidence" value="ECO:0000314"/>
    <property type="project" value="TAIR"/>
</dbReference>
<dbReference type="GO" id="GO:0000325">
    <property type="term" value="C:plant-type vacuole"/>
    <property type="evidence" value="ECO:0007005"/>
    <property type="project" value="TAIR"/>
</dbReference>
<dbReference type="GO" id="GO:0005886">
    <property type="term" value="C:plasma membrane"/>
    <property type="evidence" value="ECO:0007005"/>
    <property type="project" value="TAIR"/>
</dbReference>
<dbReference type="GO" id="GO:0009506">
    <property type="term" value="C:plasmodesma"/>
    <property type="evidence" value="ECO:0007005"/>
    <property type="project" value="TAIR"/>
</dbReference>
<dbReference type="GO" id="GO:0003871">
    <property type="term" value="F:5-methyltetrahydropteroyltriglutamate-homocysteine S-methyltransferase activity"/>
    <property type="evidence" value="ECO:0000314"/>
    <property type="project" value="UniProtKB"/>
</dbReference>
<dbReference type="GO" id="GO:0005507">
    <property type="term" value="F:copper ion binding"/>
    <property type="evidence" value="ECO:0007005"/>
    <property type="project" value="TAIR"/>
</dbReference>
<dbReference type="GO" id="GO:0008705">
    <property type="term" value="F:methionine synthase activity"/>
    <property type="evidence" value="ECO:0000314"/>
    <property type="project" value="TAIR"/>
</dbReference>
<dbReference type="GO" id="GO:0003729">
    <property type="term" value="F:mRNA binding"/>
    <property type="evidence" value="ECO:0000314"/>
    <property type="project" value="TAIR"/>
</dbReference>
<dbReference type="GO" id="GO:0008270">
    <property type="term" value="F:zinc ion binding"/>
    <property type="evidence" value="ECO:0000314"/>
    <property type="project" value="UniProtKB"/>
</dbReference>
<dbReference type="GO" id="GO:0071266">
    <property type="term" value="P:'de novo' L-methionine biosynthetic process"/>
    <property type="evidence" value="ECO:0000314"/>
    <property type="project" value="UniProtKB"/>
</dbReference>
<dbReference type="GO" id="GO:0006346">
    <property type="term" value="P:DNA methylation-dependent constitutive heterochromatin formation"/>
    <property type="evidence" value="ECO:0000315"/>
    <property type="project" value="TAIR"/>
</dbReference>
<dbReference type="GO" id="GO:0009086">
    <property type="term" value="P:methionine biosynthetic process"/>
    <property type="evidence" value="ECO:0000314"/>
    <property type="project" value="TAIR"/>
</dbReference>
<dbReference type="GO" id="GO:0032259">
    <property type="term" value="P:methylation"/>
    <property type="evidence" value="ECO:0007669"/>
    <property type="project" value="UniProtKB-KW"/>
</dbReference>
<dbReference type="GO" id="GO:0010043">
    <property type="term" value="P:response to zinc ion"/>
    <property type="evidence" value="ECO:0000270"/>
    <property type="project" value="TAIR"/>
</dbReference>
<dbReference type="CDD" id="cd03311">
    <property type="entry name" value="CIMS_C_terminal_like"/>
    <property type="match status" value="1"/>
</dbReference>
<dbReference type="CDD" id="cd03312">
    <property type="entry name" value="CIMS_N_terminal_like"/>
    <property type="match status" value="1"/>
</dbReference>
<dbReference type="FunFam" id="3.20.20.210:FF:000002">
    <property type="entry name" value="5-methyltetrahydropteroyltriglutamate--homocysteine methyltransferase"/>
    <property type="match status" value="1"/>
</dbReference>
<dbReference type="FunFam" id="3.20.20.210:FF:000003">
    <property type="entry name" value="5-methyltetrahydropteroyltriglutamate--homocysteine methyltransferase"/>
    <property type="match status" value="1"/>
</dbReference>
<dbReference type="Gene3D" id="3.20.20.210">
    <property type="match status" value="2"/>
</dbReference>
<dbReference type="HAMAP" id="MF_00172">
    <property type="entry name" value="Meth_synth"/>
    <property type="match status" value="1"/>
</dbReference>
<dbReference type="InterPro" id="IPR013215">
    <property type="entry name" value="Cbl-indep_Met_Synth_N"/>
</dbReference>
<dbReference type="InterPro" id="IPR006276">
    <property type="entry name" value="Cobalamin-indep_Met_synthase"/>
</dbReference>
<dbReference type="InterPro" id="IPR002629">
    <property type="entry name" value="Met_Synth_C/arc"/>
</dbReference>
<dbReference type="InterPro" id="IPR038071">
    <property type="entry name" value="UROD/MetE-like_sf"/>
</dbReference>
<dbReference type="NCBIfam" id="TIGR01371">
    <property type="entry name" value="met_syn_B12ind"/>
    <property type="match status" value="1"/>
</dbReference>
<dbReference type="NCBIfam" id="NF003556">
    <property type="entry name" value="PRK05222.1"/>
    <property type="match status" value="1"/>
</dbReference>
<dbReference type="PANTHER" id="PTHR30519">
    <property type="entry name" value="5-METHYLTETRAHYDROPTEROYLTRIGLUTAMATE--HOMOCYSTEINE METHYLTRANSFERASE"/>
    <property type="match status" value="1"/>
</dbReference>
<dbReference type="Pfam" id="PF08267">
    <property type="entry name" value="Meth_synt_1"/>
    <property type="match status" value="1"/>
</dbReference>
<dbReference type="Pfam" id="PF01717">
    <property type="entry name" value="Meth_synt_2"/>
    <property type="match status" value="1"/>
</dbReference>
<dbReference type="PIRSF" id="PIRSF000382">
    <property type="entry name" value="MeTrfase_B12_ind"/>
    <property type="match status" value="1"/>
</dbReference>
<dbReference type="SUPFAM" id="SSF51726">
    <property type="entry name" value="UROD/MetE-like"/>
    <property type="match status" value="2"/>
</dbReference>
<accession>O50008</accession>
<accession>Q6KCR2</accession>
<accession>Q8H162</accession>
<accession>Q93ZK3</accession>
<gene>
    <name type="primary">MS1</name>
    <name type="synonym">CIMS</name>
    <name type="ordered locus">At5g17920</name>
    <name type="ORF">MPI7.9</name>
</gene>
<protein>
    <recommendedName>
        <fullName>5-methyltetrahydropteroyltriglutamate--homocysteine methyltransferase 1</fullName>
        <ecNumber evidence="2">2.1.1.14</ecNumber>
    </recommendedName>
    <alternativeName>
        <fullName>Cobalamin-independent methionine synthase 1</fullName>
        <shortName>AtMS1</shortName>
    </alternativeName>
    <alternativeName>
        <fullName>Vitamin-B12-independent methionine synthase 1</fullName>
    </alternativeName>
</protein>
<proteinExistence type="evidence at protein level"/>